<proteinExistence type="inferred from homology"/>
<reference key="1">
    <citation type="submission" date="2007-11" db="EMBL/GenBank/DDBJ databases">
        <title>Complete sequence of Delftia acidovorans DSM 14801 / SPH-1.</title>
        <authorList>
            <person name="Copeland A."/>
            <person name="Lucas S."/>
            <person name="Lapidus A."/>
            <person name="Barry K."/>
            <person name="Glavina del Rio T."/>
            <person name="Dalin E."/>
            <person name="Tice H."/>
            <person name="Pitluck S."/>
            <person name="Lowry S."/>
            <person name="Clum A."/>
            <person name="Schmutz J."/>
            <person name="Larimer F."/>
            <person name="Land M."/>
            <person name="Hauser L."/>
            <person name="Kyrpides N."/>
            <person name="Kim E."/>
            <person name="Schleheck D."/>
            <person name="Richardson P."/>
        </authorList>
    </citation>
    <scope>NUCLEOTIDE SEQUENCE [LARGE SCALE GENOMIC DNA]</scope>
    <source>
        <strain>DSM 14801 / SPH-1</strain>
    </source>
</reference>
<comment type="function">
    <text evidence="1">Plays an important role in the de novo pathway of purine nucleotide biosynthesis. Catalyzes the first committed step in the biosynthesis of AMP from IMP.</text>
</comment>
<comment type="catalytic activity">
    <reaction evidence="1">
        <text>IMP + L-aspartate + GTP = N(6)-(1,2-dicarboxyethyl)-AMP + GDP + phosphate + 2 H(+)</text>
        <dbReference type="Rhea" id="RHEA:15753"/>
        <dbReference type="ChEBI" id="CHEBI:15378"/>
        <dbReference type="ChEBI" id="CHEBI:29991"/>
        <dbReference type="ChEBI" id="CHEBI:37565"/>
        <dbReference type="ChEBI" id="CHEBI:43474"/>
        <dbReference type="ChEBI" id="CHEBI:57567"/>
        <dbReference type="ChEBI" id="CHEBI:58053"/>
        <dbReference type="ChEBI" id="CHEBI:58189"/>
        <dbReference type="EC" id="6.3.4.4"/>
    </reaction>
</comment>
<comment type="cofactor">
    <cofactor evidence="1">
        <name>Mg(2+)</name>
        <dbReference type="ChEBI" id="CHEBI:18420"/>
    </cofactor>
    <text evidence="1">Binds 1 Mg(2+) ion per subunit.</text>
</comment>
<comment type="pathway">
    <text evidence="1">Purine metabolism; AMP biosynthesis via de novo pathway; AMP from IMP: step 1/2.</text>
</comment>
<comment type="subunit">
    <text evidence="1">Homodimer.</text>
</comment>
<comment type="subcellular location">
    <subcellularLocation>
        <location evidence="1">Cytoplasm</location>
    </subcellularLocation>
</comment>
<comment type="similarity">
    <text evidence="1">Belongs to the adenylosuccinate synthetase family.</text>
</comment>
<protein>
    <recommendedName>
        <fullName evidence="1">Adenylosuccinate synthetase</fullName>
        <shortName evidence="1">AMPSase</shortName>
        <shortName evidence="1">AdSS</shortName>
        <ecNumber evidence="1">6.3.4.4</ecNumber>
    </recommendedName>
    <alternativeName>
        <fullName evidence="1">IMP--aspartate ligase</fullName>
    </alternativeName>
</protein>
<organism>
    <name type="scientific">Delftia acidovorans (strain DSM 14801 / SPH-1)</name>
    <dbReference type="NCBI Taxonomy" id="398578"/>
    <lineage>
        <taxon>Bacteria</taxon>
        <taxon>Pseudomonadati</taxon>
        <taxon>Pseudomonadota</taxon>
        <taxon>Betaproteobacteria</taxon>
        <taxon>Burkholderiales</taxon>
        <taxon>Comamonadaceae</taxon>
        <taxon>Delftia</taxon>
    </lineage>
</organism>
<sequence>MKATKGRNVVVVGTQWGDEGKGKLVDWLTESAQGVVRFQGGHNAGHTLVINGVKTALHLIPSGIMRPGVKCYIGNGVVLSAAKLFEEIEGLEKAGVQVRDRLRVSEACPLILPFHSALDVAREAAREQGGTEKIGTTGRGIGPAYEDKIARRALRVQDLKYPERFATKLRELLALHNHILVNVLGSKNFTFGDALKPYIKDGEVQFDAVYEEAMRHAELLKPMMADVSRELNAAHAEGANLLFEGAQGTLLDVDHGTYPYVTSSNCVAGNAAAGSGVGPGMLHYILGITKAYCTRVGGGPFPTELDWEKEGTPGWHMSTVGAEKGVTTGRSRRCGWFDAALLKRSAQVNGLSGLCITKLDVLDGLQELLLCVGYELDGEKIDLLPMGADEIARCKPIYESIPGWTDSTVGVTDYDKLPANARRYLERIEEVTGVPIAMVSTSPDRDHTILMQNPYAAQ</sequence>
<name>PURA_DELAS</name>
<accession>A9BMU3</accession>
<gene>
    <name evidence="1" type="primary">purA</name>
    <name type="ordered locus">Daci_5009</name>
</gene>
<dbReference type="EC" id="6.3.4.4" evidence="1"/>
<dbReference type="EMBL" id="CP000884">
    <property type="protein sequence ID" value="ABX37638.1"/>
    <property type="molecule type" value="Genomic_DNA"/>
</dbReference>
<dbReference type="RefSeq" id="WP_012206808.1">
    <property type="nucleotide sequence ID" value="NC_010002.1"/>
</dbReference>
<dbReference type="SMR" id="A9BMU3"/>
<dbReference type="STRING" id="398578.Daci_5009"/>
<dbReference type="KEGG" id="dac:Daci_5009"/>
<dbReference type="eggNOG" id="COG0104">
    <property type="taxonomic scope" value="Bacteria"/>
</dbReference>
<dbReference type="HOGENOM" id="CLU_029848_0_0_4"/>
<dbReference type="UniPathway" id="UPA00075">
    <property type="reaction ID" value="UER00335"/>
</dbReference>
<dbReference type="Proteomes" id="UP000000784">
    <property type="component" value="Chromosome"/>
</dbReference>
<dbReference type="GO" id="GO:0005737">
    <property type="term" value="C:cytoplasm"/>
    <property type="evidence" value="ECO:0007669"/>
    <property type="project" value="UniProtKB-SubCell"/>
</dbReference>
<dbReference type="GO" id="GO:0004019">
    <property type="term" value="F:adenylosuccinate synthase activity"/>
    <property type="evidence" value="ECO:0007669"/>
    <property type="project" value="UniProtKB-UniRule"/>
</dbReference>
<dbReference type="GO" id="GO:0005525">
    <property type="term" value="F:GTP binding"/>
    <property type="evidence" value="ECO:0007669"/>
    <property type="project" value="UniProtKB-UniRule"/>
</dbReference>
<dbReference type="GO" id="GO:0000287">
    <property type="term" value="F:magnesium ion binding"/>
    <property type="evidence" value="ECO:0007669"/>
    <property type="project" value="UniProtKB-UniRule"/>
</dbReference>
<dbReference type="GO" id="GO:0044208">
    <property type="term" value="P:'de novo' AMP biosynthetic process"/>
    <property type="evidence" value="ECO:0007669"/>
    <property type="project" value="UniProtKB-UniRule"/>
</dbReference>
<dbReference type="GO" id="GO:0046040">
    <property type="term" value="P:IMP metabolic process"/>
    <property type="evidence" value="ECO:0007669"/>
    <property type="project" value="TreeGrafter"/>
</dbReference>
<dbReference type="CDD" id="cd03108">
    <property type="entry name" value="AdSS"/>
    <property type="match status" value="1"/>
</dbReference>
<dbReference type="FunFam" id="1.10.300.10:FF:000001">
    <property type="entry name" value="Adenylosuccinate synthetase"/>
    <property type="match status" value="1"/>
</dbReference>
<dbReference type="FunFam" id="3.90.170.10:FF:000001">
    <property type="entry name" value="Adenylosuccinate synthetase"/>
    <property type="match status" value="1"/>
</dbReference>
<dbReference type="Gene3D" id="3.40.440.10">
    <property type="entry name" value="Adenylosuccinate Synthetase, subunit A, domain 1"/>
    <property type="match status" value="1"/>
</dbReference>
<dbReference type="Gene3D" id="1.10.300.10">
    <property type="entry name" value="Adenylosuccinate Synthetase, subunit A, domain 2"/>
    <property type="match status" value="1"/>
</dbReference>
<dbReference type="Gene3D" id="3.90.170.10">
    <property type="entry name" value="Adenylosuccinate Synthetase, subunit A, domain 3"/>
    <property type="match status" value="1"/>
</dbReference>
<dbReference type="HAMAP" id="MF_00011">
    <property type="entry name" value="Adenylosucc_synth"/>
    <property type="match status" value="1"/>
</dbReference>
<dbReference type="InterPro" id="IPR018220">
    <property type="entry name" value="Adenylosuccin_syn_GTP-bd"/>
</dbReference>
<dbReference type="InterPro" id="IPR033128">
    <property type="entry name" value="Adenylosuccin_syn_Lys_AS"/>
</dbReference>
<dbReference type="InterPro" id="IPR042109">
    <property type="entry name" value="Adenylosuccinate_synth_dom1"/>
</dbReference>
<dbReference type="InterPro" id="IPR042110">
    <property type="entry name" value="Adenylosuccinate_synth_dom2"/>
</dbReference>
<dbReference type="InterPro" id="IPR042111">
    <property type="entry name" value="Adenylosuccinate_synth_dom3"/>
</dbReference>
<dbReference type="InterPro" id="IPR001114">
    <property type="entry name" value="Adenylosuccinate_synthetase"/>
</dbReference>
<dbReference type="InterPro" id="IPR027417">
    <property type="entry name" value="P-loop_NTPase"/>
</dbReference>
<dbReference type="NCBIfam" id="NF002223">
    <property type="entry name" value="PRK01117.1"/>
    <property type="match status" value="1"/>
</dbReference>
<dbReference type="NCBIfam" id="TIGR00184">
    <property type="entry name" value="purA"/>
    <property type="match status" value="1"/>
</dbReference>
<dbReference type="PANTHER" id="PTHR11846">
    <property type="entry name" value="ADENYLOSUCCINATE SYNTHETASE"/>
    <property type="match status" value="1"/>
</dbReference>
<dbReference type="PANTHER" id="PTHR11846:SF0">
    <property type="entry name" value="ADENYLOSUCCINATE SYNTHETASE"/>
    <property type="match status" value="1"/>
</dbReference>
<dbReference type="Pfam" id="PF00709">
    <property type="entry name" value="Adenylsucc_synt"/>
    <property type="match status" value="1"/>
</dbReference>
<dbReference type="SMART" id="SM00788">
    <property type="entry name" value="Adenylsucc_synt"/>
    <property type="match status" value="1"/>
</dbReference>
<dbReference type="SUPFAM" id="SSF52540">
    <property type="entry name" value="P-loop containing nucleoside triphosphate hydrolases"/>
    <property type="match status" value="1"/>
</dbReference>
<dbReference type="PROSITE" id="PS01266">
    <property type="entry name" value="ADENYLOSUCCIN_SYN_1"/>
    <property type="match status" value="1"/>
</dbReference>
<dbReference type="PROSITE" id="PS00513">
    <property type="entry name" value="ADENYLOSUCCIN_SYN_2"/>
    <property type="match status" value="1"/>
</dbReference>
<feature type="chain" id="PRO_1000089286" description="Adenylosuccinate synthetase">
    <location>
        <begin position="1"/>
        <end position="458"/>
    </location>
</feature>
<feature type="active site" description="Proton acceptor" evidence="1">
    <location>
        <position position="18"/>
    </location>
</feature>
<feature type="active site" description="Proton donor" evidence="1">
    <location>
        <position position="46"/>
    </location>
</feature>
<feature type="binding site" evidence="1">
    <location>
        <begin position="17"/>
        <end position="23"/>
    </location>
    <ligand>
        <name>GTP</name>
        <dbReference type="ChEBI" id="CHEBI:37565"/>
    </ligand>
</feature>
<feature type="binding site" description="in other chain" evidence="1">
    <location>
        <begin position="18"/>
        <end position="21"/>
    </location>
    <ligand>
        <name>IMP</name>
        <dbReference type="ChEBI" id="CHEBI:58053"/>
        <note>ligand shared between dimeric partners</note>
    </ligand>
</feature>
<feature type="binding site" evidence="1">
    <location>
        <position position="18"/>
    </location>
    <ligand>
        <name>Mg(2+)</name>
        <dbReference type="ChEBI" id="CHEBI:18420"/>
    </ligand>
</feature>
<feature type="binding site" description="in other chain" evidence="1">
    <location>
        <begin position="43"/>
        <end position="46"/>
    </location>
    <ligand>
        <name>IMP</name>
        <dbReference type="ChEBI" id="CHEBI:58053"/>
        <note>ligand shared between dimeric partners</note>
    </ligand>
</feature>
<feature type="binding site" evidence="1">
    <location>
        <begin position="45"/>
        <end position="47"/>
    </location>
    <ligand>
        <name>GTP</name>
        <dbReference type="ChEBI" id="CHEBI:37565"/>
    </ligand>
</feature>
<feature type="binding site" evidence="1">
    <location>
        <position position="45"/>
    </location>
    <ligand>
        <name>Mg(2+)</name>
        <dbReference type="ChEBI" id="CHEBI:18420"/>
    </ligand>
</feature>
<feature type="binding site" description="in other chain" evidence="1">
    <location>
        <position position="137"/>
    </location>
    <ligand>
        <name>IMP</name>
        <dbReference type="ChEBI" id="CHEBI:58053"/>
        <note>ligand shared between dimeric partners</note>
    </ligand>
</feature>
<feature type="binding site" evidence="1">
    <location>
        <position position="151"/>
    </location>
    <ligand>
        <name>IMP</name>
        <dbReference type="ChEBI" id="CHEBI:58053"/>
        <note>ligand shared between dimeric partners</note>
    </ligand>
</feature>
<feature type="binding site" description="in other chain" evidence="1">
    <location>
        <position position="247"/>
    </location>
    <ligand>
        <name>IMP</name>
        <dbReference type="ChEBI" id="CHEBI:58053"/>
        <note>ligand shared between dimeric partners</note>
    </ligand>
</feature>
<feature type="binding site" description="in other chain" evidence="1">
    <location>
        <position position="262"/>
    </location>
    <ligand>
        <name>IMP</name>
        <dbReference type="ChEBI" id="CHEBI:58053"/>
        <note>ligand shared between dimeric partners</note>
    </ligand>
</feature>
<feature type="binding site" evidence="1">
    <location>
        <begin position="326"/>
        <end position="332"/>
    </location>
    <ligand>
        <name>substrate</name>
    </ligand>
</feature>
<feature type="binding site" description="in other chain" evidence="1">
    <location>
        <position position="330"/>
    </location>
    <ligand>
        <name>IMP</name>
        <dbReference type="ChEBI" id="CHEBI:58053"/>
        <note>ligand shared between dimeric partners</note>
    </ligand>
</feature>
<feature type="binding site" evidence="1">
    <location>
        <position position="332"/>
    </location>
    <ligand>
        <name>GTP</name>
        <dbReference type="ChEBI" id="CHEBI:37565"/>
    </ligand>
</feature>
<feature type="binding site" evidence="1">
    <location>
        <begin position="358"/>
        <end position="360"/>
    </location>
    <ligand>
        <name>GTP</name>
        <dbReference type="ChEBI" id="CHEBI:37565"/>
    </ligand>
</feature>
<feature type="binding site" evidence="1">
    <location>
        <begin position="440"/>
        <end position="442"/>
    </location>
    <ligand>
        <name>GTP</name>
        <dbReference type="ChEBI" id="CHEBI:37565"/>
    </ligand>
</feature>
<evidence type="ECO:0000255" key="1">
    <source>
        <dbReference type="HAMAP-Rule" id="MF_00011"/>
    </source>
</evidence>
<keyword id="KW-0963">Cytoplasm</keyword>
<keyword id="KW-0342">GTP-binding</keyword>
<keyword id="KW-0436">Ligase</keyword>
<keyword id="KW-0460">Magnesium</keyword>
<keyword id="KW-0479">Metal-binding</keyword>
<keyword id="KW-0547">Nucleotide-binding</keyword>
<keyword id="KW-0658">Purine biosynthesis</keyword>
<keyword id="KW-1185">Reference proteome</keyword>